<comment type="function">
    <text evidence="2 3 4 5 6">Cytochrome P450 monooxygenase; part of the gene clusters that mediate the biosynthesis of the host-selective toxins (HSTs) AF-toxins responsible for Alternaria black spot of strawberry disease by the strawberry pathotype (Ref.1). AF-toxin I and III are valine derivatives of 2,3-dyhydroxy-isovaleric acid and 2-hydroxy-isovaleric acid respectively, while AF II is an isoleucine derivative of 2-hydroxy-valeric acid (PubMed:15066029, PubMed:22846083, Ref.1). These derivatives are bound to a 9,10-epoxy-8-hydroxy-9-methyl-decatrienoic acid (EDA) moiety (PubMed:15066029, PubMed:22846083, Ref.1). On cellular level, AF-toxins affect plasma membrane of susceptible cells and cause a sudden increase in loss of K(+) after a few minutes of toxin treatment (PubMed:22846083). The aldo-keto reductase AFTS1 catalyzes the conversion of 2-keto-isovaleric acid (2-KIV) to 2-hydroxy-isovaleric acid (2-HIV) by reduction of its ketone to an alcohol (PubMed:15066029). The acyl-CoA ligase AFT1, the hydrolase AFT2 and the enoyl-CoA hydratases AFT3 and AFT6, but also the polyketide synthase AFT9, the acyl-CoA dehydrogenase AFT10, the cytochrome P450 monooxygenase AFT11 and the oxidoreductase AFT12 are all involved in the biosynthesis of the AK-, AF- and ACT-toxin common EDA structural moiety (PubMed:12019223, PubMed:18986255, Ref.1). The exact function of each enzyme, and of additional enzymes identified within the AF-toxin clusters have still to be determined (PubMed:12019223, PubMed:18986255, Ref.1).</text>
</comment>
<comment type="cofactor">
    <cofactor evidence="1">
        <name>heme</name>
        <dbReference type="ChEBI" id="CHEBI:30413"/>
    </cofactor>
</comment>
<comment type="pathway">
    <text evidence="9">Mycotoxin biosynthesis.</text>
</comment>
<comment type="miscellaneous">
    <text evidence="2">Gene clusters encoding host-selective toxins (HSTs) are localized on conditionally dispensable chromosomes (CDCs), also called supernumerary chromosomes, where they are present in multiple copies (PubMed:12019223). The CDCs are not essential for saprophytic growth but controls host-selective pathogenicity (PubMed:12019223).</text>
</comment>
<comment type="similarity">
    <text evidence="8">Belongs to the cytochrome P450 family.</text>
</comment>
<keyword id="KW-0349">Heme</keyword>
<keyword id="KW-0408">Iron</keyword>
<keyword id="KW-0479">Metal-binding</keyword>
<keyword id="KW-0503">Monooxygenase</keyword>
<keyword id="KW-0560">Oxidoreductase</keyword>
<keyword id="KW-0843">Virulence</keyword>
<dbReference type="EC" id="1.-.-.-" evidence="9"/>
<dbReference type="EMBL" id="AB179766">
    <property type="protein sequence ID" value="BAD97696.1"/>
    <property type="molecule type" value="Genomic_DNA"/>
</dbReference>
<dbReference type="SMR" id="Q50LG1"/>
<dbReference type="VEuPathDB" id="FungiDB:CC77DRAFT_1010772"/>
<dbReference type="GO" id="GO:0020037">
    <property type="term" value="F:heme binding"/>
    <property type="evidence" value="ECO:0007669"/>
    <property type="project" value="InterPro"/>
</dbReference>
<dbReference type="GO" id="GO:0005506">
    <property type="term" value="F:iron ion binding"/>
    <property type="evidence" value="ECO:0007669"/>
    <property type="project" value="InterPro"/>
</dbReference>
<dbReference type="GO" id="GO:0004497">
    <property type="term" value="F:monooxygenase activity"/>
    <property type="evidence" value="ECO:0007669"/>
    <property type="project" value="UniProtKB-KW"/>
</dbReference>
<dbReference type="GO" id="GO:0016705">
    <property type="term" value="F:oxidoreductase activity, acting on paired donors, with incorporation or reduction of molecular oxygen"/>
    <property type="evidence" value="ECO:0007669"/>
    <property type="project" value="InterPro"/>
</dbReference>
<dbReference type="GO" id="GO:0009058">
    <property type="term" value="P:biosynthetic process"/>
    <property type="evidence" value="ECO:0007669"/>
    <property type="project" value="UniProtKB-ARBA"/>
</dbReference>
<dbReference type="CDD" id="cd11061">
    <property type="entry name" value="CYP67-like"/>
    <property type="match status" value="1"/>
</dbReference>
<dbReference type="Gene3D" id="1.10.630.10">
    <property type="entry name" value="Cytochrome P450"/>
    <property type="match status" value="1"/>
</dbReference>
<dbReference type="InterPro" id="IPR001128">
    <property type="entry name" value="Cyt_P450"/>
</dbReference>
<dbReference type="InterPro" id="IPR017972">
    <property type="entry name" value="Cyt_P450_CS"/>
</dbReference>
<dbReference type="InterPro" id="IPR002401">
    <property type="entry name" value="Cyt_P450_E_grp-I"/>
</dbReference>
<dbReference type="InterPro" id="IPR036396">
    <property type="entry name" value="Cyt_P450_sf"/>
</dbReference>
<dbReference type="InterPro" id="IPR050121">
    <property type="entry name" value="Cytochrome_P450_monoxygenase"/>
</dbReference>
<dbReference type="PANTHER" id="PTHR24305">
    <property type="entry name" value="CYTOCHROME P450"/>
    <property type="match status" value="1"/>
</dbReference>
<dbReference type="PANTHER" id="PTHR24305:SF210">
    <property type="entry name" value="CYTOCHROME P450 MONOOXYGENASE ASQL-RELATED"/>
    <property type="match status" value="1"/>
</dbReference>
<dbReference type="Pfam" id="PF00067">
    <property type="entry name" value="p450"/>
    <property type="match status" value="1"/>
</dbReference>
<dbReference type="PRINTS" id="PR00463">
    <property type="entry name" value="EP450I"/>
</dbReference>
<dbReference type="PRINTS" id="PR00385">
    <property type="entry name" value="P450"/>
</dbReference>
<dbReference type="SUPFAM" id="SSF48264">
    <property type="entry name" value="Cytochrome P450"/>
    <property type="match status" value="1"/>
</dbReference>
<dbReference type="PROSITE" id="PS00086">
    <property type="entry name" value="CYTOCHROME_P450"/>
    <property type="match status" value="1"/>
</dbReference>
<sequence>MTYEKPDLKRTKATVSFKRIYLHRASEFPGPWLCQCSSIMAQYHAWRGDLPRYLHVLHEKYGDFVRYAPNHVSIRHCDVWEDVYGFQRNVSKYDTTYSPFRLAPDFTSTWNTSNVDVHKSRRKLLNKLFSEQHLDDYGTLITVQVDEFMRQILEALPKDKDVMAGPINFAYKSDVVAREIITSLVSGQTYGFQSGDAKSASLLADISKFERKLYLLGFAPWLKMLPSFKPTLALAQWIVQSSKQGLASGSKNTLVAKMLAARDEEKDVEFSRNDVIADARFFLLGGSVTSSSALSATLFFLLHHPVEMQELYDELRGIFPTYEDIKADAQLMRCKRLRAVFEESMRLAPPVPTLLPRLVGPGGIKACGRYVPEGVVIGAPCWAISRDKRYFDKPNVFKPDRWLADSSDPVALEKMLLATRASQPFSYGPRACPGRALAFRENGLLLAKLVYAFEMEPVQDKSIVEESLTGICDGLVFNQLDTVGAHEVELMVRYRLRLDGKTKRRVSGN</sequence>
<accession>Q50LG1</accession>
<reference key="1">
    <citation type="journal article" date="2005" name="J. Gen. Plant Pathol.">
        <title>Structural analysis of cosmid clone pcAFT-2 carrying AFT10-1 encoding an acyl-CoA dehydrogenase involved in AF-toxin production in the strawberry pathotype of Alternaria alternata.</title>
        <authorList>
            <person name="Ruswandi S."/>
            <person name="Kitani K."/>
            <person name="Akimitsu K."/>
            <person name="Tsuge T."/>
            <person name="Shiraishi T."/>
            <person name="Yamamoto M."/>
        </authorList>
    </citation>
    <scope>NUCLEOTIDE SEQUENCE [GENOMIC DNA]</scope>
    <scope>FUNCTION</scope>
    <scope>PATHWAY</scope>
    <source>
        <strain>NAF8</strain>
    </source>
</reference>
<reference key="2">
    <citation type="journal article" date="2002" name="Genetics">
        <title>A conditionally dispensable chromosome controls host-specific pathogenicity in the fungal plant pathogen Alternaria alternata.</title>
        <authorList>
            <person name="Hatta R."/>
            <person name="Ito K."/>
            <person name="Hosaki Y."/>
            <person name="Tanaka T."/>
            <person name="Tanaka A."/>
            <person name="Yamamoto M."/>
            <person name="Akimitsu K."/>
            <person name="Tsuge T."/>
        </authorList>
    </citation>
    <scope>FUNCTION</scope>
    <source>
        <strain>NAF8</strain>
    </source>
</reference>
<reference key="3">
    <citation type="journal article" date="2004" name="Mol. Microbiol.">
        <title>Dissection of the host range of the fungal plant pathogen Alternaria alternata by modification of secondary metabolism.</title>
        <authorList>
            <person name="Ito K."/>
            <person name="Tanaka T."/>
            <person name="Hatta R."/>
            <person name="Yamamoto M."/>
            <person name="Akimitsu K."/>
            <person name="Tsuge T."/>
        </authorList>
    </citation>
    <scope>FUNCTION</scope>
    <source>
        <strain>NAF8</strain>
    </source>
</reference>
<reference key="4">
    <citation type="journal article" date="2008" name="Mol. Plant Microbe Interact.">
        <title>Functional analysis of a multicopy host-selective ACT-toxin biosynthesis gene in the tangerine pathotype of Alternaria alternata using RNA silencing.</title>
        <authorList>
            <person name="Miyamoto Y."/>
            <person name="Masunaka A."/>
            <person name="Tsuge T."/>
            <person name="Yamamoto M."/>
            <person name="Ohtani K."/>
            <person name="Fukumoto T."/>
            <person name="Gomi K."/>
            <person name="Peever T.L."/>
            <person name="Akimitsu K."/>
        </authorList>
    </citation>
    <scope>FUNCTION</scope>
    <source>
        <strain>NAF8</strain>
    </source>
</reference>
<reference key="5">
    <citation type="journal article" date="2013" name="FEMS Microbiol. Rev.">
        <title>Host-selective toxins produced by the plant pathogenic fungus Alternaria alternata.</title>
        <authorList>
            <person name="Tsuge T."/>
            <person name="Harimoto Y."/>
            <person name="Akimitsu K."/>
            <person name="Ohtani K."/>
            <person name="Kodama M."/>
            <person name="Akagi Y."/>
            <person name="Egusa M."/>
            <person name="Yamamoto M."/>
            <person name="Otani H."/>
        </authorList>
    </citation>
    <scope>REVIEW ON HOST-SELECTIVE TOXINS</scope>
</reference>
<organism>
    <name type="scientific">Alternaria alternata</name>
    <name type="common">Alternaria rot fungus</name>
    <name type="synonym">Torula alternata</name>
    <dbReference type="NCBI Taxonomy" id="5599"/>
    <lineage>
        <taxon>Eukaryota</taxon>
        <taxon>Fungi</taxon>
        <taxon>Dikarya</taxon>
        <taxon>Ascomycota</taxon>
        <taxon>Pezizomycotina</taxon>
        <taxon>Dothideomycetes</taxon>
        <taxon>Pleosporomycetidae</taxon>
        <taxon>Pleosporales</taxon>
        <taxon>Pleosporineae</taxon>
        <taxon>Pleosporaceae</taxon>
        <taxon>Alternaria</taxon>
        <taxon>Alternaria sect. Alternaria</taxon>
        <taxon>Alternaria alternata complex</taxon>
    </lineage>
</organism>
<name>AF111_ALTAL</name>
<evidence type="ECO:0000250" key="1">
    <source>
        <dbReference type="UniProtKB" id="P04798"/>
    </source>
</evidence>
<evidence type="ECO:0000269" key="2">
    <source>
    </source>
</evidence>
<evidence type="ECO:0000269" key="3">
    <source>
    </source>
</evidence>
<evidence type="ECO:0000269" key="4">
    <source>
    </source>
</evidence>
<evidence type="ECO:0000269" key="5">
    <source ref="1"/>
</evidence>
<evidence type="ECO:0000303" key="6">
    <source>
    </source>
</evidence>
<evidence type="ECO:0000303" key="7">
    <source ref="1"/>
</evidence>
<evidence type="ECO:0000305" key="8"/>
<evidence type="ECO:0000305" key="9">
    <source ref="1"/>
</evidence>
<proteinExistence type="inferred from homology"/>
<feature type="chain" id="PRO_0000444821" description="Cytochrome P450 monooxygenase AFT11-1">
    <location>
        <begin position="1"/>
        <end position="509"/>
    </location>
</feature>
<feature type="binding site" description="axial binding residue" evidence="1">
    <location>
        <position position="432"/>
    </location>
    <ligand>
        <name>heme</name>
        <dbReference type="ChEBI" id="CHEBI:30413"/>
    </ligand>
    <ligandPart>
        <name>Fe</name>
        <dbReference type="ChEBI" id="CHEBI:18248"/>
    </ligandPart>
</feature>
<protein>
    <recommendedName>
        <fullName evidence="7">Cytochrome P450 monooxygenase AFT11-1</fullName>
        <ecNumber evidence="9">1.-.-.-</ecNumber>
    </recommendedName>
    <alternativeName>
        <fullName evidence="7">AF-toxin biosynthesis protein 11-1</fullName>
    </alternativeName>
</protein>
<gene>
    <name evidence="7" type="primary">AFT11-1</name>
</gene>